<protein>
    <recommendedName>
        <fullName evidence="1">Holliday junction resolvase RecU</fullName>
        <ecNumber evidence="1">3.1.21.10</ecNumber>
    </recommendedName>
    <alternativeName>
        <fullName evidence="1">Recombination protein U homolog</fullName>
    </alternativeName>
</protein>
<keyword id="KW-0963">Cytoplasm</keyword>
<keyword id="KW-0227">DNA damage</keyword>
<keyword id="KW-0233">DNA recombination</keyword>
<keyword id="KW-0234">DNA repair</keyword>
<keyword id="KW-0255">Endonuclease</keyword>
<keyword id="KW-0378">Hydrolase</keyword>
<keyword id="KW-0460">Magnesium</keyword>
<keyword id="KW-0479">Metal-binding</keyword>
<keyword id="KW-0540">Nuclease</keyword>
<accession>B2G7F2</accession>
<gene>
    <name evidence="1" type="primary">recU</name>
    <name type="ordered locus">LAR_0868</name>
</gene>
<comment type="function">
    <text evidence="1">Endonuclease that resolves Holliday junction intermediates in genetic recombination. Cleaves mobile four-strand junctions by introducing symmetrical nicks in paired strands. Promotes annealing of linear ssDNA with homologous dsDNA. Required for DNA repair, homologous recombination and chromosome segregation.</text>
</comment>
<comment type="catalytic activity">
    <reaction evidence="1">
        <text>Endonucleolytic cleavage at a junction such as a reciprocal single-stranded crossover between two homologous DNA duplexes (Holliday junction).</text>
        <dbReference type="EC" id="3.1.21.10"/>
    </reaction>
</comment>
<comment type="cofactor">
    <cofactor evidence="1">
        <name>Mg(2+)</name>
        <dbReference type="ChEBI" id="CHEBI:18420"/>
    </cofactor>
    <text evidence="1">Binds 1 Mg(2+) ion per subunit.</text>
</comment>
<comment type="subcellular location">
    <subcellularLocation>
        <location evidence="1">Cytoplasm</location>
    </subcellularLocation>
</comment>
<comment type="similarity">
    <text evidence="1">Belongs to the RecU family.</text>
</comment>
<dbReference type="EC" id="3.1.21.10" evidence="1"/>
<dbReference type="EMBL" id="AP007281">
    <property type="protein sequence ID" value="BAG25384.1"/>
    <property type="molecule type" value="Genomic_DNA"/>
</dbReference>
<dbReference type="SMR" id="B2G7F2"/>
<dbReference type="KEGG" id="lrf:LAR_0868"/>
<dbReference type="HOGENOM" id="CLU_096340_0_0_9"/>
<dbReference type="GO" id="GO:0005737">
    <property type="term" value="C:cytoplasm"/>
    <property type="evidence" value="ECO:0007669"/>
    <property type="project" value="UniProtKB-SubCell"/>
</dbReference>
<dbReference type="GO" id="GO:0004519">
    <property type="term" value="F:endonuclease activity"/>
    <property type="evidence" value="ECO:0007669"/>
    <property type="project" value="UniProtKB-UniRule"/>
</dbReference>
<dbReference type="GO" id="GO:0000287">
    <property type="term" value="F:magnesium ion binding"/>
    <property type="evidence" value="ECO:0007669"/>
    <property type="project" value="UniProtKB-UniRule"/>
</dbReference>
<dbReference type="GO" id="GO:0003676">
    <property type="term" value="F:nucleic acid binding"/>
    <property type="evidence" value="ECO:0007669"/>
    <property type="project" value="InterPro"/>
</dbReference>
<dbReference type="GO" id="GO:0007059">
    <property type="term" value="P:chromosome segregation"/>
    <property type="evidence" value="ECO:0007669"/>
    <property type="project" value="UniProtKB-UniRule"/>
</dbReference>
<dbReference type="GO" id="GO:0006310">
    <property type="term" value="P:DNA recombination"/>
    <property type="evidence" value="ECO:0007669"/>
    <property type="project" value="UniProtKB-UniRule"/>
</dbReference>
<dbReference type="GO" id="GO:0006281">
    <property type="term" value="P:DNA repair"/>
    <property type="evidence" value="ECO:0007669"/>
    <property type="project" value="UniProtKB-UniRule"/>
</dbReference>
<dbReference type="CDD" id="cd22354">
    <property type="entry name" value="RecU-like"/>
    <property type="match status" value="1"/>
</dbReference>
<dbReference type="Gene3D" id="3.40.1350.10">
    <property type="match status" value="1"/>
</dbReference>
<dbReference type="HAMAP" id="MF_00130">
    <property type="entry name" value="RecU"/>
    <property type="match status" value="1"/>
</dbReference>
<dbReference type="InterPro" id="IPR004612">
    <property type="entry name" value="Resolv_RecU"/>
</dbReference>
<dbReference type="InterPro" id="IPR011335">
    <property type="entry name" value="Restrct_endonuc-II-like"/>
</dbReference>
<dbReference type="InterPro" id="IPR011856">
    <property type="entry name" value="tRNA_endonuc-like_dom_sf"/>
</dbReference>
<dbReference type="NCBIfam" id="NF002584">
    <property type="entry name" value="PRK02234.1-5"/>
    <property type="match status" value="1"/>
</dbReference>
<dbReference type="NCBIfam" id="TIGR00648">
    <property type="entry name" value="recU"/>
    <property type="match status" value="1"/>
</dbReference>
<dbReference type="Pfam" id="PF03838">
    <property type="entry name" value="RecU"/>
    <property type="match status" value="1"/>
</dbReference>
<dbReference type="PIRSF" id="PIRSF037785">
    <property type="entry name" value="RecU"/>
    <property type="match status" value="1"/>
</dbReference>
<dbReference type="SUPFAM" id="SSF52980">
    <property type="entry name" value="Restriction endonuclease-like"/>
    <property type="match status" value="1"/>
</dbReference>
<evidence type="ECO:0000255" key="1">
    <source>
        <dbReference type="HAMAP-Rule" id="MF_00130"/>
    </source>
</evidence>
<evidence type="ECO:0000256" key="2">
    <source>
        <dbReference type="SAM" id="MobiDB-lite"/>
    </source>
</evidence>
<proteinExistence type="inferred from homology"/>
<reference key="1">
    <citation type="journal article" date="2008" name="DNA Res.">
        <title>Comparative genome analysis of Lactobacillus reuteri and Lactobacillus fermentum reveal a genomic island for reuterin and cobalamin production.</title>
        <authorList>
            <person name="Morita H."/>
            <person name="Toh H."/>
            <person name="Fukuda S."/>
            <person name="Horikawa H."/>
            <person name="Oshima K."/>
            <person name="Suzuki T."/>
            <person name="Murakami M."/>
            <person name="Hisamatsu S."/>
            <person name="Kato Y."/>
            <person name="Takizawa T."/>
            <person name="Fukuoka H."/>
            <person name="Yoshimura T."/>
            <person name="Itoh K."/>
            <person name="O'Sullivan D.J."/>
            <person name="McKay L.L."/>
            <person name="Ohno H."/>
            <person name="Kikuchi J."/>
            <person name="Masaoka T."/>
            <person name="Hattori M."/>
        </authorList>
    </citation>
    <scope>NUCLEOTIDE SEQUENCE [LARGE SCALE GENOMIC DNA]</scope>
    <source>
        <strain>JCM 1112</strain>
    </source>
</reference>
<organism>
    <name type="scientific">Limosilactobacillus reuteri subsp. reuteri (strain JCM 1112)</name>
    <name type="common">Lactobacillus reuteri</name>
    <dbReference type="NCBI Taxonomy" id="557433"/>
    <lineage>
        <taxon>Bacteria</taxon>
        <taxon>Bacillati</taxon>
        <taxon>Bacillota</taxon>
        <taxon>Bacilli</taxon>
        <taxon>Lactobacillales</taxon>
        <taxon>Lactobacillaceae</taxon>
        <taxon>Limosilactobacillus</taxon>
    </lineage>
</organism>
<feature type="chain" id="PRO_1000095677" description="Holliday junction resolvase RecU">
    <location>
        <begin position="1"/>
        <end position="204"/>
    </location>
</feature>
<feature type="region of interest" description="Disordered" evidence="2">
    <location>
        <begin position="1"/>
        <end position="24"/>
    </location>
</feature>
<feature type="compositionally biased region" description="Polar residues" evidence="2">
    <location>
        <begin position="7"/>
        <end position="24"/>
    </location>
</feature>
<feature type="binding site" evidence="1">
    <location>
        <position position="87"/>
    </location>
    <ligand>
        <name>Mg(2+)</name>
        <dbReference type="ChEBI" id="CHEBI:18420"/>
    </ligand>
</feature>
<feature type="binding site" evidence="1">
    <location>
        <position position="89"/>
    </location>
    <ligand>
        <name>Mg(2+)</name>
        <dbReference type="ChEBI" id="CHEBI:18420"/>
    </ligand>
</feature>
<feature type="binding site" evidence="1">
    <location>
        <position position="102"/>
    </location>
    <ligand>
        <name>Mg(2+)</name>
        <dbReference type="ChEBI" id="CHEBI:18420"/>
    </ligand>
</feature>
<feature type="binding site" evidence="1">
    <location>
        <position position="121"/>
    </location>
    <ligand>
        <name>Mg(2+)</name>
        <dbReference type="ChEBI" id="CHEBI:18420"/>
    </ligand>
</feature>
<feature type="site" description="Transition state stabilizer" evidence="1">
    <location>
        <position position="104"/>
    </location>
</feature>
<sequence>MTIHYPNGQQPVQHYNTHNELPTPHQSIYAKRGMSLEDEINHSNQYYLARHIAVIHKKPTPIQLVKVDYPKRSAAVIKEAYFRRPSTTDYNGVYRGYYIDFDAKETRNKNSFPLKNFHPHQIQHMRECVAQGGICFAFIKFTELDLLYLLPASNLFKYWDQQQNGGRKSILRTDIAKEGYQIHYQLNPRLPYLNAVDKIIAAKA</sequence>
<name>RECU_LIMRJ</name>